<protein>
    <recommendedName>
        <fullName evidence="1">Large ribosomal subunit protein uL14</fullName>
    </recommendedName>
    <alternativeName>
        <fullName evidence="2">50S ribosomal protein L14</fullName>
    </alternativeName>
</protein>
<feature type="chain" id="PRO_1000068011" description="Large ribosomal subunit protein uL14">
    <location>
        <begin position="1"/>
        <end position="123"/>
    </location>
</feature>
<proteinExistence type="inferred from homology"/>
<keyword id="KW-0687">Ribonucleoprotein</keyword>
<keyword id="KW-0689">Ribosomal protein</keyword>
<keyword id="KW-0694">RNA-binding</keyword>
<keyword id="KW-0699">rRNA-binding</keyword>
<organism>
    <name type="scientific">Serratia proteamaculans (strain 568)</name>
    <dbReference type="NCBI Taxonomy" id="399741"/>
    <lineage>
        <taxon>Bacteria</taxon>
        <taxon>Pseudomonadati</taxon>
        <taxon>Pseudomonadota</taxon>
        <taxon>Gammaproteobacteria</taxon>
        <taxon>Enterobacterales</taxon>
        <taxon>Yersiniaceae</taxon>
        <taxon>Serratia</taxon>
    </lineage>
</organism>
<dbReference type="EMBL" id="CP000826">
    <property type="protein sequence ID" value="ABV43627.1"/>
    <property type="molecule type" value="Genomic_DNA"/>
</dbReference>
<dbReference type="SMR" id="A8GKI7"/>
<dbReference type="STRING" id="399741.Spro_4534"/>
<dbReference type="KEGG" id="spe:Spro_4534"/>
<dbReference type="eggNOG" id="COG0093">
    <property type="taxonomic scope" value="Bacteria"/>
</dbReference>
<dbReference type="HOGENOM" id="CLU_095071_2_1_6"/>
<dbReference type="OrthoDB" id="9806379at2"/>
<dbReference type="GO" id="GO:0022625">
    <property type="term" value="C:cytosolic large ribosomal subunit"/>
    <property type="evidence" value="ECO:0007669"/>
    <property type="project" value="TreeGrafter"/>
</dbReference>
<dbReference type="GO" id="GO:0070180">
    <property type="term" value="F:large ribosomal subunit rRNA binding"/>
    <property type="evidence" value="ECO:0007669"/>
    <property type="project" value="TreeGrafter"/>
</dbReference>
<dbReference type="GO" id="GO:0003735">
    <property type="term" value="F:structural constituent of ribosome"/>
    <property type="evidence" value="ECO:0007669"/>
    <property type="project" value="InterPro"/>
</dbReference>
<dbReference type="GO" id="GO:0006412">
    <property type="term" value="P:translation"/>
    <property type="evidence" value="ECO:0007669"/>
    <property type="project" value="UniProtKB-UniRule"/>
</dbReference>
<dbReference type="CDD" id="cd00337">
    <property type="entry name" value="Ribosomal_uL14"/>
    <property type="match status" value="1"/>
</dbReference>
<dbReference type="FunFam" id="2.40.150.20:FF:000001">
    <property type="entry name" value="50S ribosomal protein L14"/>
    <property type="match status" value="1"/>
</dbReference>
<dbReference type="Gene3D" id="2.40.150.20">
    <property type="entry name" value="Ribosomal protein L14"/>
    <property type="match status" value="1"/>
</dbReference>
<dbReference type="HAMAP" id="MF_01367">
    <property type="entry name" value="Ribosomal_uL14"/>
    <property type="match status" value="1"/>
</dbReference>
<dbReference type="InterPro" id="IPR000218">
    <property type="entry name" value="Ribosomal_uL14"/>
</dbReference>
<dbReference type="InterPro" id="IPR005745">
    <property type="entry name" value="Ribosomal_uL14_bac-type"/>
</dbReference>
<dbReference type="InterPro" id="IPR019972">
    <property type="entry name" value="Ribosomal_uL14_CS"/>
</dbReference>
<dbReference type="InterPro" id="IPR036853">
    <property type="entry name" value="Ribosomal_uL14_sf"/>
</dbReference>
<dbReference type="NCBIfam" id="TIGR01067">
    <property type="entry name" value="rplN_bact"/>
    <property type="match status" value="1"/>
</dbReference>
<dbReference type="PANTHER" id="PTHR11761">
    <property type="entry name" value="50S/60S RIBOSOMAL PROTEIN L14/L23"/>
    <property type="match status" value="1"/>
</dbReference>
<dbReference type="PANTHER" id="PTHR11761:SF3">
    <property type="entry name" value="LARGE RIBOSOMAL SUBUNIT PROTEIN UL14M"/>
    <property type="match status" value="1"/>
</dbReference>
<dbReference type="Pfam" id="PF00238">
    <property type="entry name" value="Ribosomal_L14"/>
    <property type="match status" value="1"/>
</dbReference>
<dbReference type="SMART" id="SM01374">
    <property type="entry name" value="Ribosomal_L14"/>
    <property type="match status" value="1"/>
</dbReference>
<dbReference type="SUPFAM" id="SSF50193">
    <property type="entry name" value="Ribosomal protein L14"/>
    <property type="match status" value="1"/>
</dbReference>
<dbReference type="PROSITE" id="PS00049">
    <property type="entry name" value="RIBOSOMAL_L14"/>
    <property type="match status" value="1"/>
</dbReference>
<evidence type="ECO:0000255" key="1">
    <source>
        <dbReference type="HAMAP-Rule" id="MF_01367"/>
    </source>
</evidence>
<evidence type="ECO:0000305" key="2"/>
<name>RL14_SERP5</name>
<reference key="1">
    <citation type="submission" date="2007-09" db="EMBL/GenBank/DDBJ databases">
        <title>Complete sequence of chromosome of Serratia proteamaculans 568.</title>
        <authorList>
            <consortium name="US DOE Joint Genome Institute"/>
            <person name="Copeland A."/>
            <person name="Lucas S."/>
            <person name="Lapidus A."/>
            <person name="Barry K."/>
            <person name="Glavina del Rio T."/>
            <person name="Dalin E."/>
            <person name="Tice H."/>
            <person name="Pitluck S."/>
            <person name="Chain P."/>
            <person name="Malfatti S."/>
            <person name="Shin M."/>
            <person name="Vergez L."/>
            <person name="Schmutz J."/>
            <person name="Larimer F."/>
            <person name="Land M."/>
            <person name="Hauser L."/>
            <person name="Kyrpides N."/>
            <person name="Kim E."/>
            <person name="Taghavi S."/>
            <person name="Newman L."/>
            <person name="Vangronsveld J."/>
            <person name="van der Lelie D."/>
            <person name="Richardson P."/>
        </authorList>
    </citation>
    <scope>NUCLEOTIDE SEQUENCE [LARGE SCALE GENOMIC DNA]</scope>
    <source>
        <strain>568</strain>
    </source>
</reference>
<accession>A8GKI7</accession>
<comment type="function">
    <text evidence="1">Binds to 23S rRNA. Forms part of two intersubunit bridges in the 70S ribosome.</text>
</comment>
<comment type="subunit">
    <text evidence="1">Part of the 50S ribosomal subunit. Forms a cluster with proteins L3 and L19. In the 70S ribosome, L14 and L19 interact and together make contacts with the 16S rRNA in bridges B5 and B8.</text>
</comment>
<comment type="similarity">
    <text evidence="1">Belongs to the universal ribosomal protein uL14 family.</text>
</comment>
<gene>
    <name evidence="1" type="primary">rplN</name>
    <name type="ordered locus">Spro_4534</name>
</gene>
<sequence>MIQEQTMLTVADNSGARRVMCIKVLGGSHRRYAGIGDVIKITIKEAIPRGKVKKGDVLKAVVVRTKKGVRRPDGSVIRFDGNACVILNNNSEQPIGTRIFGPVTRELRNEKFMKIISLAPEVL</sequence>